<organism>
    <name type="scientific">Francisella tularensis subsp. holarctica (strain LVS)</name>
    <dbReference type="NCBI Taxonomy" id="376619"/>
    <lineage>
        <taxon>Bacteria</taxon>
        <taxon>Pseudomonadati</taxon>
        <taxon>Pseudomonadota</taxon>
        <taxon>Gammaproteobacteria</taxon>
        <taxon>Thiotrichales</taxon>
        <taxon>Francisellaceae</taxon>
        <taxon>Francisella</taxon>
    </lineage>
</organism>
<feature type="chain" id="PRO_1000048645" description="Chromosomal replication initiator protein DnaA">
    <location>
        <begin position="1"/>
        <end position="491"/>
    </location>
</feature>
<feature type="region of interest" description="Domain I, interacts with DnaA modulators" evidence="1">
    <location>
        <begin position="1"/>
        <end position="69"/>
    </location>
</feature>
<feature type="region of interest" description="Domain II" evidence="1">
    <location>
        <begin position="69"/>
        <end position="154"/>
    </location>
</feature>
<feature type="region of interest" description="Domain III, AAA+ region" evidence="1">
    <location>
        <begin position="155"/>
        <end position="371"/>
    </location>
</feature>
<feature type="region of interest" description="Domain IV, binds dsDNA" evidence="1">
    <location>
        <begin position="372"/>
        <end position="491"/>
    </location>
</feature>
<feature type="binding site" evidence="1">
    <location>
        <position position="199"/>
    </location>
    <ligand>
        <name>ATP</name>
        <dbReference type="ChEBI" id="CHEBI:30616"/>
    </ligand>
</feature>
<feature type="binding site" evidence="1">
    <location>
        <position position="201"/>
    </location>
    <ligand>
        <name>ATP</name>
        <dbReference type="ChEBI" id="CHEBI:30616"/>
    </ligand>
</feature>
<feature type="binding site" evidence="1">
    <location>
        <position position="202"/>
    </location>
    <ligand>
        <name>ATP</name>
        <dbReference type="ChEBI" id="CHEBI:30616"/>
    </ligand>
</feature>
<feature type="binding site" evidence="1">
    <location>
        <position position="203"/>
    </location>
    <ligand>
        <name>ATP</name>
        <dbReference type="ChEBI" id="CHEBI:30616"/>
    </ligand>
</feature>
<keyword id="KW-0067">ATP-binding</keyword>
<keyword id="KW-0963">Cytoplasm</keyword>
<keyword id="KW-0235">DNA replication</keyword>
<keyword id="KW-0238">DNA-binding</keyword>
<keyword id="KW-0446">Lipid-binding</keyword>
<keyword id="KW-0547">Nucleotide-binding</keyword>
<keyword id="KW-1185">Reference proteome</keyword>
<name>DNAA_FRATH</name>
<accession>Q2A640</accession>
<sequence length="491" mass="55840">MTTWDKCLKKIKKNLSTFEYKTWIKPIHVEQNSNLFTVYCNNEYFKKHIKSKYGNLILSTIQECHGNDLIIEYSNKKFSGEKITEVITAGPQANFFSTTSVEIKDESEDTKVVQEPKILKKSNSKDFSSSQELFGFDEAMLITAKEDEEYSFGLPLKEKYVFDSFVVGDANKIARAAAMQVSINPGKLHNPLFIYGGSGLGKTHLMQAIGNHAREVNPNAKIIYTNSEQFIKDYVNSIRLQDQDEFQRVYRSADILLIDDIQFIAGKEGTAQEFFHTFNALYENGKQIILTSDKYPNEIEGLEERLVSRFGYGLTVSVDMPDLETRIAILLKKAHDLGQKLPNETAAFIAENVRTNVRELEGALNRVLTTSKFNHKDPTIEVAQACLRDVIKIQEKKVKIDNIQKVVADFYRIRVKDLTSNQRSRNIARPRQIAMSLARELTSHSLPEIGNAFGGRDHTTVMHAVKAITKLRQSNTSISDDYELLLDKISR</sequence>
<evidence type="ECO:0000255" key="1">
    <source>
        <dbReference type="HAMAP-Rule" id="MF_00377"/>
    </source>
</evidence>
<comment type="function">
    <text evidence="1">Plays an essential role in the initiation and regulation of chromosomal replication. ATP-DnaA binds to the origin of replication (oriC) to initiate formation of the DNA replication initiation complex once per cell cycle. Binds the DnaA box (a 9 base pair repeat at the origin) and separates the double-stranded (ds)DNA. Forms a right-handed helical filament on oriC DNA; dsDNA binds to the exterior of the filament while single-stranded (ss)DNA is stabiized in the filament's interior. The ATP-DnaA-oriC complex binds and stabilizes one strand of the AT-rich DNA unwinding element (DUE), permitting loading of DNA polymerase. After initiation quickly degrades to an ADP-DnaA complex that is not apt for DNA replication. Binds acidic phospholipids.</text>
</comment>
<comment type="subunit">
    <text evidence="1">Oligomerizes as a right-handed, spiral filament on DNA at oriC.</text>
</comment>
<comment type="subcellular location">
    <subcellularLocation>
        <location evidence="1">Cytoplasm</location>
    </subcellularLocation>
</comment>
<comment type="domain">
    <text evidence="1">Domain I is involved in oligomerization and binding regulators, domain II is flexibile and of varying length in different bacteria, domain III forms the AAA+ region, while domain IV binds dsDNA.</text>
</comment>
<comment type="similarity">
    <text evidence="1">Belongs to the DnaA family.</text>
</comment>
<proteinExistence type="inferred from homology"/>
<protein>
    <recommendedName>
        <fullName evidence="1">Chromosomal replication initiator protein DnaA</fullName>
    </recommendedName>
</protein>
<dbReference type="EMBL" id="AM233362">
    <property type="protein sequence ID" value="CAJ78442.1"/>
    <property type="molecule type" value="Genomic_DNA"/>
</dbReference>
<dbReference type="RefSeq" id="WP_003013591.1">
    <property type="nucleotide sequence ID" value="NZ_CP009694.1"/>
</dbReference>
<dbReference type="SMR" id="Q2A640"/>
<dbReference type="KEGG" id="ftl:FTL_0001"/>
<dbReference type="Proteomes" id="UP000001944">
    <property type="component" value="Chromosome"/>
</dbReference>
<dbReference type="GO" id="GO:0005737">
    <property type="term" value="C:cytoplasm"/>
    <property type="evidence" value="ECO:0007669"/>
    <property type="project" value="UniProtKB-SubCell"/>
</dbReference>
<dbReference type="GO" id="GO:0005886">
    <property type="term" value="C:plasma membrane"/>
    <property type="evidence" value="ECO:0007669"/>
    <property type="project" value="TreeGrafter"/>
</dbReference>
<dbReference type="GO" id="GO:0005524">
    <property type="term" value="F:ATP binding"/>
    <property type="evidence" value="ECO:0007669"/>
    <property type="project" value="UniProtKB-UniRule"/>
</dbReference>
<dbReference type="GO" id="GO:0016887">
    <property type="term" value="F:ATP hydrolysis activity"/>
    <property type="evidence" value="ECO:0007669"/>
    <property type="project" value="InterPro"/>
</dbReference>
<dbReference type="GO" id="GO:0003688">
    <property type="term" value="F:DNA replication origin binding"/>
    <property type="evidence" value="ECO:0007669"/>
    <property type="project" value="UniProtKB-UniRule"/>
</dbReference>
<dbReference type="GO" id="GO:0008289">
    <property type="term" value="F:lipid binding"/>
    <property type="evidence" value="ECO:0007669"/>
    <property type="project" value="UniProtKB-KW"/>
</dbReference>
<dbReference type="GO" id="GO:0006270">
    <property type="term" value="P:DNA replication initiation"/>
    <property type="evidence" value="ECO:0007669"/>
    <property type="project" value="UniProtKB-UniRule"/>
</dbReference>
<dbReference type="GO" id="GO:0006275">
    <property type="term" value="P:regulation of DNA replication"/>
    <property type="evidence" value="ECO:0007669"/>
    <property type="project" value="UniProtKB-UniRule"/>
</dbReference>
<dbReference type="CDD" id="cd00009">
    <property type="entry name" value="AAA"/>
    <property type="match status" value="1"/>
</dbReference>
<dbReference type="CDD" id="cd06571">
    <property type="entry name" value="Bac_DnaA_C"/>
    <property type="match status" value="1"/>
</dbReference>
<dbReference type="FunFam" id="3.40.50.300:FF:000668">
    <property type="entry name" value="Chromosomal replication initiator protein DnaA"/>
    <property type="match status" value="1"/>
</dbReference>
<dbReference type="Gene3D" id="1.10.1750.10">
    <property type="match status" value="1"/>
</dbReference>
<dbReference type="Gene3D" id="1.10.8.60">
    <property type="match status" value="1"/>
</dbReference>
<dbReference type="Gene3D" id="3.30.300.180">
    <property type="match status" value="1"/>
</dbReference>
<dbReference type="Gene3D" id="3.40.50.300">
    <property type="entry name" value="P-loop containing nucleotide triphosphate hydrolases"/>
    <property type="match status" value="1"/>
</dbReference>
<dbReference type="HAMAP" id="MF_00377">
    <property type="entry name" value="DnaA_bact"/>
    <property type="match status" value="1"/>
</dbReference>
<dbReference type="InterPro" id="IPR003593">
    <property type="entry name" value="AAA+_ATPase"/>
</dbReference>
<dbReference type="InterPro" id="IPR001957">
    <property type="entry name" value="Chromosome_initiator_DnaA"/>
</dbReference>
<dbReference type="InterPro" id="IPR020591">
    <property type="entry name" value="Chromosome_initiator_DnaA-like"/>
</dbReference>
<dbReference type="InterPro" id="IPR018312">
    <property type="entry name" value="Chromosome_initiator_DnaA_CS"/>
</dbReference>
<dbReference type="InterPro" id="IPR013159">
    <property type="entry name" value="DnaA_C"/>
</dbReference>
<dbReference type="InterPro" id="IPR013317">
    <property type="entry name" value="DnaA_dom"/>
</dbReference>
<dbReference type="InterPro" id="IPR024633">
    <property type="entry name" value="DnaA_N_dom"/>
</dbReference>
<dbReference type="InterPro" id="IPR038454">
    <property type="entry name" value="DnaA_N_sf"/>
</dbReference>
<dbReference type="InterPro" id="IPR027417">
    <property type="entry name" value="P-loop_NTPase"/>
</dbReference>
<dbReference type="InterPro" id="IPR010921">
    <property type="entry name" value="Trp_repressor/repl_initiator"/>
</dbReference>
<dbReference type="NCBIfam" id="TIGR00362">
    <property type="entry name" value="DnaA"/>
    <property type="match status" value="1"/>
</dbReference>
<dbReference type="PANTHER" id="PTHR30050">
    <property type="entry name" value="CHROMOSOMAL REPLICATION INITIATOR PROTEIN DNAA"/>
    <property type="match status" value="1"/>
</dbReference>
<dbReference type="PANTHER" id="PTHR30050:SF2">
    <property type="entry name" value="CHROMOSOMAL REPLICATION INITIATOR PROTEIN DNAA"/>
    <property type="match status" value="1"/>
</dbReference>
<dbReference type="Pfam" id="PF00308">
    <property type="entry name" value="Bac_DnaA"/>
    <property type="match status" value="1"/>
</dbReference>
<dbReference type="Pfam" id="PF08299">
    <property type="entry name" value="Bac_DnaA_C"/>
    <property type="match status" value="1"/>
</dbReference>
<dbReference type="Pfam" id="PF11638">
    <property type="entry name" value="DnaA_N"/>
    <property type="match status" value="1"/>
</dbReference>
<dbReference type="PRINTS" id="PR00051">
    <property type="entry name" value="DNAA"/>
</dbReference>
<dbReference type="SMART" id="SM00382">
    <property type="entry name" value="AAA"/>
    <property type="match status" value="1"/>
</dbReference>
<dbReference type="SMART" id="SM00760">
    <property type="entry name" value="Bac_DnaA_C"/>
    <property type="match status" value="1"/>
</dbReference>
<dbReference type="SUPFAM" id="SSF52540">
    <property type="entry name" value="P-loop containing nucleoside triphosphate hydrolases"/>
    <property type="match status" value="1"/>
</dbReference>
<dbReference type="SUPFAM" id="SSF48295">
    <property type="entry name" value="TrpR-like"/>
    <property type="match status" value="1"/>
</dbReference>
<dbReference type="PROSITE" id="PS01008">
    <property type="entry name" value="DNAA"/>
    <property type="match status" value="1"/>
</dbReference>
<reference key="1">
    <citation type="submission" date="2006-03" db="EMBL/GenBank/DDBJ databases">
        <title>Complete genome sequence of Francisella tularensis LVS (Live Vaccine Strain).</title>
        <authorList>
            <person name="Chain P."/>
            <person name="Larimer F."/>
            <person name="Land M."/>
            <person name="Stilwagen S."/>
            <person name="Larsson P."/>
            <person name="Bearden S."/>
            <person name="Chu M."/>
            <person name="Oyston P."/>
            <person name="Forsman M."/>
            <person name="Andersson S."/>
            <person name="Lindler L."/>
            <person name="Titball R."/>
            <person name="Garcia E."/>
        </authorList>
    </citation>
    <scope>NUCLEOTIDE SEQUENCE [LARGE SCALE GENOMIC DNA]</scope>
    <source>
        <strain>LVS</strain>
    </source>
</reference>
<gene>
    <name evidence="1" type="primary">dnaA</name>
    <name type="ordered locus">FTL_0001</name>
</gene>